<accession>Q05007</accession>
<reference key="1">
    <citation type="journal article" date="1993" name="Curr. Biol.">
        <title>HOM/Hox genes of Artemia: implications for the origin of insect and crustacea body plans.</title>
        <authorList>
            <person name="Averof M."/>
            <person name="Akam M."/>
        </authorList>
    </citation>
    <scope>NUCLEOTIDE SEQUENCE [GENOMIC DNA]</scope>
</reference>
<organism>
    <name type="scientific">Artemia franciscana</name>
    <name type="common">Brine shrimp</name>
    <name type="synonym">Artemia sanfranciscana</name>
    <dbReference type="NCBI Taxonomy" id="6661"/>
    <lineage>
        <taxon>Eukaryota</taxon>
        <taxon>Metazoa</taxon>
        <taxon>Ecdysozoa</taxon>
        <taxon>Arthropoda</taxon>
        <taxon>Crustacea</taxon>
        <taxon>Branchiopoda</taxon>
        <taxon>Anostraca</taxon>
        <taxon>Artemiidae</taxon>
        <taxon>Artemia</taxon>
    </lineage>
</organism>
<feature type="chain" id="PRO_0000200255" description="Homeobox protein abdominal-A homolog">
    <location>
        <begin position="1" status="less than"/>
        <end position="139"/>
    </location>
</feature>
<feature type="DNA-binding region" description="Homeobox" evidence="1">
    <location>
        <begin position="6"/>
        <end position="65"/>
    </location>
</feature>
<feature type="region of interest" description="Disordered" evidence="2">
    <location>
        <begin position="73"/>
        <end position="99"/>
    </location>
</feature>
<feature type="region of interest" description="Disordered" evidence="2">
    <location>
        <begin position="119"/>
        <end position="139"/>
    </location>
</feature>
<feature type="compositionally biased region" description="Basic and acidic residues" evidence="2">
    <location>
        <begin position="73"/>
        <end position="86"/>
    </location>
</feature>
<feature type="compositionally biased region" description="Basic and acidic residues" evidence="2">
    <location>
        <begin position="125"/>
        <end position="139"/>
    </location>
</feature>
<feature type="non-terminal residue">
    <location>
        <position position="1"/>
    </location>
</feature>
<protein>
    <recommendedName>
        <fullName>Homeobox protein abdominal-A homolog</fullName>
    </recommendedName>
</protein>
<gene>
    <name type="primary">ABDA</name>
</gene>
<keyword id="KW-0217">Developmental protein</keyword>
<keyword id="KW-0238">DNA-binding</keyword>
<keyword id="KW-0371">Homeobox</keyword>
<keyword id="KW-0539">Nucleus</keyword>
<sequence length="139" mass="16311">PNGCPRRRGRQTYTRYQTLELEKEFHFNHYLTRRRRIEIAHALCLTERQIKIWFQNRRMKLKKELRAVKEINEQARKDREEQEHKIRSSSSDDGSIGKGVGIPLDASLLKSNDSQSVSLNHLTHKSPDGMMDKTPKSII</sequence>
<proteinExistence type="inferred from homology"/>
<name>ABDA_ARTSF</name>
<dbReference type="EMBL" id="X70076">
    <property type="protein sequence ID" value="CAA49681.1"/>
    <property type="molecule type" value="Genomic_DNA"/>
</dbReference>
<dbReference type="PIR" id="S31810">
    <property type="entry name" value="S31810"/>
</dbReference>
<dbReference type="SMR" id="Q05007"/>
<dbReference type="GO" id="GO:0005634">
    <property type="term" value="C:nucleus"/>
    <property type="evidence" value="ECO:0007669"/>
    <property type="project" value="UniProtKB-SubCell"/>
</dbReference>
<dbReference type="GO" id="GO:0000981">
    <property type="term" value="F:DNA-binding transcription factor activity, RNA polymerase II-specific"/>
    <property type="evidence" value="ECO:0007669"/>
    <property type="project" value="InterPro"/>
</dbReference>
<dbReference type="GO" id="GO:0000978">
    <property type="term" value="F:RNA polymerase II cis-regulatory region sequence-specific DNA binding"/>
    <property type="evidence" value="ECO:0007669"/>
    <property type="project" value="TreeGrafter"/>
</dbReference>
<dbReference type="GO" id="GO:0009952">
    <property type="term" value="P:anterior/posterior pattern specification"/>
    <property type="evidence" value="ECO:0007669"/>
    <property type="project" value="TreeGrafter"/>
</dbReference>
<dbReference type="GO" id="GO:0000122">
    <property type="term" value="P:negative regulation of transcription by RNA polymerase II"/>
    <property type="evidence" value="ECO:0007669"/>
    <property type="project" value="TreeGrafter"/>
</dbReference>
<dbReference type="CDD" id="cd00086">
    <property type="entry name" value="homeodomain"/>
    <property type="match status" value="1"/>
</dbReference>
<dbReference type="FunFam" id="1.10.10.60:FF:000193">
    <property type="entry name" value="Ultrabithorax, isoform C"/>
    <property type="match status" value="1"/>
</dbReference>
<dbReference type="Gene3D" id="1.10.10.60">
    <property type="entry name" value="Homeodomain-like"/>
    <property type="match status" value="1"/>
</dbReference>
<dbReference type="InterPro" id="IPR022132">
    <property type="entry name" value="Abdominal-A"/>
</dbReference>
<dbReference type="InterPro" id="IPR050296">
    <property type="entry name" value="Antp_homeobox"/>
</dbReference>
<dbReference type="InterPro" id="IPR001356">
    <property type="entry name" value="HD"/>
</dbReference>
<dbReference type="InterPro" id="IPR020479">
    <property type="entry name" value="HD_metazoa"/>
</dbReference>
<dbReference type="InterPro" id="IPR017970">
    <property type="entry name" value="Homeobox_CS"/>
</dbReference>
<dbReference type="InterPro" id="IPR009057">
    <property type="entry name" value="Homeodomain-like_sf"/>
</dbReference>
<dbReference type="PANTHER" id="PTHR45659:SF4">
    <property type="entry name" value="HOMEOBOX PROTEIN ABDOMINAL-A"/>
    <property type="match status" value="1"/>
</dbReference>
<dbReference type="PANTHER" id="PTHR45659">
    <property type="entry name" value="HOMEOBOX PROTEIN HOX"/>
    <property type="match status" value="1"/>
</dbReference>
<dbReference type="Pfam" id="PF12407">
    <property type="entry name" value="Abdominal-A"/>
    <property type="match status" value="1"/>
</dbReference>
<dbReference type="Pfam" id="PF00046">
    <property type="entry name" value="Homeodomain"/>
    <property type="match status" value="1"/>
</dbReference>
<dbReference type="PRINTS" id="PR00024">
    <property type="entry name" value="HOMEOBOX"/>
</dbReference>
<dbReference type="SMART" id="SM00389">
    <property type="entry name" value="HOX"/>
    <property type="match status" value="1"/>
</dbReference>
<dbReference type="SUPFAM" id="SSF46689">
    <property type="entry name" value="Homeodomain-like"/>
    <property type="match status" value="1"/>
</dbReference>
<dbReference type="PROSITE" id="PS00027">
    <property type="entry name" value="HOMEOBOX_1"/>
    <property type="match status" value="1"/>
</dbReference>
<dbReference type="PROSITE" id="PS50071">
    <property type="entry name" value="HOMEOBOX_2"/>
    <property type="match status" value="1"/>
</dbReference>
<comment type="function">
    <text>Required for segmental identity of the second through eighth abdominal segments. Once a pattern of abdA expression is turned on in a given parasegment, it remains on the more posterior parasegment, so that the complex pattern of expression is built up in the successive parasegments. The abdA product appears to repress expression of Ubx whenever they appear in the same cell, but abdA is repressed by AbdB only in the eight and ninth abdominal segments.</text>
</comment>
<comment type="subcellular location">
    <subcellularLocation>
        <location evidence="3">Nucleus</location>
    </subcellularLocation>
</comment>
<comment type="similarity">
    <text evidence="3">Belongs to the Antp homeobox family.</text>
</comment>
<evidence type="ECO:0000255" key="1">
    <source>
        <dbReference type="PROSITE-ProRule" id="PRU00108"/>
    </source>
</evidence>
<evidence type="ECO:0000256" key="2">
    <source>
        <dbReference type="SAM" id="MobiDB-lite"/>
    </source>
</evidence>
<evidence type="ECO:0000305" key="3"/>